<organism>
    <name type="scientific">Desulfitobacterium hafniense (strain Y51)</name>
    <dbReference type="NCBI Taxonomy" id="138119"/>
    <lineage>
        <taxon>Bacteria</taxon>
        <taxon>Bacillati</taxon>
        <taxon>Bacillota</taxon>
        <taxon>Clostridia</taxon>
        <taxon>Eubacteriales</taxon>
        <taxon>Desulfitobacteriaceae</taxon>
        <taxon>Desulfitobacterium</taxon>
    </lineage>
</organism>
<reference key="1">
    <citation type="journal article" date="2006" name="J. Bacteriol.">
        <title>Complete genome sequence of the dehalorespiring bacterium Desulfitobacterium hafniense Y51 and comparison with Dehalococcoides ethenogenes 195.</title>
        <authorList>
            <person name="Nonaka H."/>
            <person name="Keresztes G."/>
            <person name="Shinoda Y."/>
            <person name="Ikenaga Y."/>
            <person name="Abe M."/>
            <person name="Naito K."/>
            <person name="Inatomi K."/>
            <person name="Furukawa K."/>
            <person name="Inui M."/>
            <person name="Yukawa H."/>
        </authorList>
    </citation>
    <scope>NUCLEOTIDE SEQUENCE [LARGE SCALE GENOMIC DNA]</scope>
    <source>
        <strain>Y51</strain>
    </source>
</reference>
<keyword id="KW-0030">Aminoacyl-tRNA synthetase</keyword>
<keyword id="KW-0067">ATP-binding</keyword>
<keyword id="KW-0963">Cytoplasm</keyword>
<keyword id="KW-0436">Ligase</keyword>
<keyword id="KW-0479">Metal-binding</keyword>
<keyword id="KW-0547">Nucleotide-binding</keyword>
<keyword id="KW-0648">Protein biosynthesis</keyword>
<keyword id="KW-1185">Reference proteome</keyword>
<keyword id="KW-0694">RNA-binding</keyword>
<keyword id="KW-0820">tRNA-binding</keyword>
<keyword id="KW-0862">Zinc</keyword>
<sequence>MYTGNQLRDMFLNFFASKGHRILPSASLIPKDDPTLLLTVAGMVPFKPYFMRKVEPPFPRATTSQKCVRTPDLEVVGKTARHHTFFEMLGNFSFGDYFKAEAIPWAWEFVTEVLKLPIDQLWITVHPEDEEAKNLWIEKTGVSPERIKYDPENLWAAGPVGPCGYCSEIYVDLGESRGCGKPDCALGCDCDRFLEIWNLVFMQYNRDEAGLLTPLPKQNIDTGMGLERIASVMQGAASNFDTDLFLPIINKVAELSGIPYHDSPKNDVAMKVVADHTRAVSFMLSDGIRPGSEGRGYVLRRILRRAIRYARLLGIDKPFLEQIFLIIQKDYSHHYPELKENENFILNHLRLEEKNFQATLEQGTQILQDKVKTLQEAGETMLSGADAFYLYETYGFPVELTEEMLIEQGMSVDMETFNAAAEEHRRLAKEQSQQMKAVQESAAISEKAKALGTTPFLGYHELAAHTKVEALFRDGEEVKDAAEGDEVLIFLRESPFYAESGGQISDSGVIRSLRAEAKLIEVKKGVTGTVYHRFLLTQGVLHTGDEVEALVDEHLRLATARHHSATHLLQAALRAVLGEHVQQAGSLVTPDRLRFDFTHFSALTSAELQRVEDLLNEAVLANMPVAAEEMSLDAAKASGATALFGEKYGDTVRVVSMGDYSLELCGGTHIRATGDIGLVKIISEGGIGAGLRRIEAVAGAEALKYMRSLNDQILDAAQLLKAQPSDLLKRIQGLLVQVKDLEKEVQQLNAKVAKSEVESLLQQVKDVEGVPVLAAKVSAQDMDTLRNTADLLKDKMKDGVLVLGAAVEGKVNWVTVVTPVGLRGLHAGQIIKEVAKITGGGGGGRPDMAQAGGKDAAKLGEALDQVPAIIKSHIK</sequence>
<protein>
    <recommendedName>
        <fullName evidence="1">Alanine--tRNA ligase</fullName>
        <ecNumber evidence="1">6.1.1.7</ecNumber>
    </recommendedName>
    <alternativeName>
        <fullName evidence="1">Alanyl-tRNA synthetase</fullName>
        <shortName evidence="1">AlaRS</shortName>
    </alternativeName>
</protein>
<dbReference type="EC" id="6.1.1.7" evidence="1"/>
<dbReference type="EMBL" id="AP008230">
    <property type="protein sequence ID" value="BAE84210.1"/>
    <property type="molecule type" value="Genomic_DNA"/>
</dbReference>
<dbReference type="RefSeq" id="WP_011460322.1">
    <property type="nucleotide sequence ID" value="NC_007907.1"/>
</dbReference>
<dbReference type="SMR" id="Q24UT2"/>
<dbReference type="STRING" id="138119.DSY2421"/>
<dbReference type="KEGG" id="dsy:DSY2421"/>
<dbReference type="eggNOG" id="COG0013">
    <property type="taxonomic scope" value="Bacteria"/>
</dbReference>
<dbReference type="HOGENOM" id="CLU_004485_1_1_9"/>
<dbReference type="Proteomes" id="UP000001946">
    <property type="component" value="Chromosome"/>
</dbReference>
<dbReference type="GO" id="GO:0005829">
    <property type="term" value="C:cytosol"/>
    <property type="evidence" value="ECO:0007669"/>
    <property type="project" value="TreeGrafter"/>
</dbReference>
<dbReference type="GO" id="GO:0004813">
    <property type="term" value="F:alanine-tRNA ligase activity"/>
    <property type="evidence" value="ECO:0007669"/>
    <property type="project" value="UniProtKB-UniRule"/>
</dbReference>
<dbReference type="GO" id="GO:0002161">
    <property type="term" value="F:aminoacyl-tRNA deacylase activity"/>
    <property type="evidence" value="ECO:0007669"/>
    <property type="project" value="TreeGrafter"/>
</dbReference>
<dbReference type="GO" id="GO:0005524">
    <property type="term" value="F:ATP binding"/>
    <property type="evidence" value="ECO:0007669"/>
    <property type="project" value="UniProtKB-UniRule"/>
</dbReference>
<dbReference type="GO" id="GO:0140096">
    <property type="term" value="F:catalytic activity, acting on a protein"/>
    <property type="evidence" value="ECO:0007669"/>
    <property type="project" value="UniProtKB-ARBA"/>
</dbReference>
<dbReference type="GO" id="GO:0016740">
    <property type="term" value="F:transferase activity"/>
    <property type="evidence" value="ECO:0007669"/>
    <property type="project" value="UniProtKB-ARBA"/>
</dbReference>
<dbReference type="GO" id="GO:0000049">
    <property type="term" value="F:tRNA binding"/>
    <property type="evidence" value="ECO:0007669"/>
    <property type="project" value="UniProtKB-KW"/>
</dbReference>
<dbReference type="GO" id="GO:0008270">
    <property type="term" value="F:zinc ion binding"/>
    <property type="evidence" value="ECO:0007669"/>
    <property type="project" value="UniProtKB-UniRule"/>
</dbReference>
<dbReference type="GO" id="GO:0006419">
    <property type="term" value="P:alanyl-tRNA aminoacylation"/>
    <property type="evidence" value="ECO:0007669"/>
    <property type="project" value="UniProtKB-UniRule"/>
</dbReference>
<dbReference type="CDD" id="cd00673">
    <property type="entry name" value="AlaRS_core"/>
    <property type="match status" value="1"/>
</dbReference>
<dbReference type="FunFam" id="3.10.310.40:FF:000001">
    <property type="entry name" value="Alanine--tRNA ligase"/>
    <property type="match status" value="1"/>
</dbReference>
<dbReference type="FunFam" id="3.30.54.20:FF:000001">
    <property type="entry name" value="Alanine--tRNA ligase"/>
    <property type="match status" value="1"/>
</dbReference>
<dbReference type="FunFam" id="3.30.930.10:FF:000004">
    <property type="entry name" value="Alanine--tRNA ligase"/>
    <property type="match status" value="1"/>
</dbReference>
<dbReference type="FunFam" id="3.30.980.10:FF:000004">
    <property type="entry name" value="Alanine--tRNA ligase, cytoplasmic"/>
    <property type="match status" value="1"/>
</dbReference>
<dbReference type="Gene3D" id="2.40.30.130">
    <property type="match status" value="1"/>
</dbReference>
<dbReference type="Gene3D" id="3.10.310.40">
    <property type="match status" value="1"/>
</dbReference>
<dbReference type="Gene3D" id="3.30.54.20">
    <property type="match status" value="1"/>
</dbReference>
<dbReference type="Gene3D" id="6.10.250.550">
    <property type="match status" value="1"/>
</dbReference>
<dbReference type="Gene3D" id="3.30.930.10">
    <property type="entry name" value="Bira Bifunctional Protein, Domain 2"/>
    <property type="match status" value="1"/>
</dbReference>
<dbReference type="Gene3D" id="3.30.980.10">
    <property type="entry name" value="Threonyl-trna Synthetase, Chain A, domain 2"/>
    <property type="match status" value="1"/>
</dbReference>
<dbReference type="HAMAP" id="MF_00036_B">
    <property type="entry name" value="Ala_tRNA_synth_B"/>
    <property type="match status" value="1"/>
</dbReference>
<dbReference type="InterPro" id="IPR045864">
    <property type="entry name" value="aa-tRNA-synth_II/BPL/LPL"/>
</dbReference>
<dbReference type="InterPro" id="IPR002318">
    <property type="entry name" value="Ala-tRNA-lgiase_IIc"/>
</dbReference>
<dbReference type="InterPro" id="IPR018162">
    <property type="entry name" value="Ala-tRNA-ligase_IIc_anticod-bd"/>
</dbReference>
<dbReference type="InterPro" id="IPR018165">
    <property type="entry name" value="Ala-tRNA-synth_IIc_core"/>
</dbReference>
<dbReference type="InterPro" id="IPR018164">
    <property type="entry name" value="Ala-tRNA-synth_IIc_N"/>
</dbReference>
<dbReference type="InterPro" id="IPR050058">
    <property type="entry name" value="Ala-tRNA_ligase"/>
</dbReference>
<dbReference type="InterPro" id="IPR023033">
    <property type="entry name" value="Ala_tRNA_ligase_euk/bac"/>
</dbReference>
<dbReference type="InterPro" id="IPR003156">
    <property type="entry name" value="DHHA1_dom"/>
</dbReference>
<dbReference type="InterPro" id="IPR018163">
    <property type="entry name" value="Thr/Ala-tRNA-synth_IIc_edit"/>
</dbReference>
<dbReference type="InterPro" id="IPR009000">
    <property type="entry name" value="Transl_B-barrel_sf"/>
</dbReference>
<dbReference type="InterPro" id="IPR012947">
    <property type="entry name" value="tRNA_SAD"/>
</dbReference>
<dbReference type="NCBIfam" id="TIGR00344">
    <property type="entry name" value="alaS"/>
    <property type="match status" value="1"/>
</dbReference>
<dbReference type="PANTHER" id="PTHR11777:SF9">
    <property type="entry name" value="ALANINE--TRNA LIGASE, CYTOPLASMIC"/>
    <property type="match status" value="1"/>
</dbReference>
<dbReference type="PANTHER" id="PTHR11777">
    <property type="entry name" value="ALANYL-TRNA SYNTHETASE"/>
    <property type="match status" value="1"/>
</dbReference>
<dbReference type="Pfam" id="PF02272">
    <property type="entry name" value="DHHA1"/>
    <property type="match status" value="1"/>
</dbReference>
<dbReference type="Pfam" id="PF01411">
    <property type="entry name" value="tRNA-synt_2c"/>
    <property type="match status" value="1"/>
</dbReference>
<dbReference type="Pfam" id="PF07973">
    <property type="entry name" value="tRNA_SAD"/>
    <property type="match status" value="1"/>
</dbReference>
<dbReference type="PRINTS" id="PR00980">
    <property type="entry name" value="TRNASYNTHALA"/>
</dbReference>
<dbReference type="SMART" id="SM00863">
    <property type="entry name" value="tRNA_SAD"/>
    <property type="match status" value="1"/>
</dbReference>
<dbReference type="SUPFAM" id="SSF55681">
    <property type="entry name" value="Class II aaRS and biotin synthetases"/>
    <property type="match status" value="1"/>
</dbReference>
<dbReference type="SUPFAM" id="SSF101353">
    <property type="entry name" value="Putative anticodon-binding domain of alanyl-tRNA synthetase (AlaRS)"/>
    <property type="match status" value="1"/>
</dbReference>
<dbReference type="SUPFAM" id="SSF55186">
    <property type="entry name" value="ThrRS/AlaRS common domain"/>
    <property type="match status" value="1"/>
</dbReference>
<dbReference type="SUPFAM" id="SSF50447">
    <property type="entry name" value="Translation proteins"/>
    <property type="match status" value="1"/>
</dbReference>
<dbReference type="PROSITE" id="PS50860">
    <property type="entry name" value="AA_TRNA_LIGASE_II_ALA"/>
    <property type="match status" value="1"/>
</dbReference>
<gene>
    <name evidence="1" type="primary">alaS</name>
    <name type="ordered locus">DSY2421</name>
</gene>
<comment type="function">
    <text evidence="1">Catalyzes the attachment of alanine to tRNA(Ala) in a two-step reaction: alanine is first activated by ATP to form Ala-AMP and then transferred to the acceptor end of tRNA(Ala). Also edits incorrectly charged Ser-tRNA(Ala) and Gly-tRNA(Ala) via its editing domain.</text>
</comment>
<comment type="catalytic activity">
    <reaction evidence="1">
        <text>tRNA(Ala) + L-alanine + ATP = L-alanyl-tRNA(Ala) + AMP + diphosphate</text>
        <dbReference type="Rhea" id="RHEA:12540"/>
        <dbReference type="Rhea" id="RHEA-COMP:9657"/>
        <dbReference type="Rhea" id="RHEA-COMP:9923"/>
        <dbReference type="ChEBI" id="CHEBI:30616"/>
        <dbReference type="ChEBI" id="CHEBI:33019"/>
        <dbReference type="ChEBI" id="CHEBI:57972"/>
        <dbReference type="ChEBI" id="CHEBI:78442"/>
        <dbReference type="ChEBI" id="CHEBI:78497"/>
        <dbReference type="ChEBI" id="CHEBI:456215"/>
        <dbReference type="EC" id="6.1.1.7"/>
    </reaction>
</comment>
<comment type="cofactor">
    <cofactor evidence="1">
        <name>Zn(2+)</name>
        <dbReference type="ChEBI" id="CHEBI:29105"/>
    </cofactor>
    <text evidence="1">Binds 1 zinc ion per subunit.</text>
</comment>
<comment type="subcellular location">
    <subcellularLocation>
        <location evidence="1">Cytoplasm</location>
    </subcellularLocation>
</comment>
<comment type="domain">
    <text evidence="1">Consists of three domains; the N-terminal catalytic domain, the editing domain and the C-terminal C-Ala domain. The editing domain removes incorrectly charged amino acids, while the C-Ala domain, along with tRNA(Ala), serves as a bridge to cooperatively bring together the editing and aminoacylation centers thus stimulating deacylation of misacylated tRNAs.</text>
</comment>
<comment type="similarity">
    <text evidence="1">Belongs to the class-II aminoacyl-tRNA synthetase family.</text>
</comment>
<proteinExistence type="inferred from homology"/>
<feature type="chain" id="PRO_0000347583" description="Alanine--tRNA ligase">
    <location>
        <begin position="1"/>
        <end position="875"/>
    </location>
</feature>
<feature type="binding site" evidence="1">
    <location>
        <position position="563"/>
    </location>
    <ligand>
        <name>Zn(2+)</name>
        <dbReference type="ChEBI" id="CHEBI:29105"/>
    </ligand>
</feature>
<feature type="binding site" evidence="1">
    <location>
        <position position="567"/>
    </location>
    <ligand>
        <name>Zn(2+)</name>
        <dbReference type="ChEBI" id="CHEBI:29105"/>
    </ligand>
</feature>
<feature type="binding site" evidence="1">
    <location>
        <position position="665"/>
    </location>
    <ligand>
        <name>Zn(2+)</name>
        <dbReference type="ChEBI" id="CHEBI:29105"/>
    </ligand>
</feature>
<feature type="binding site" evidence="1">
    <location>
        <position position="669"/>
    </location>
    <ligand>
        <name>Zn(2+)</name>
        <dbReference type="ChEBI" id="CHEBI:29105"/>
    </ligand>
</feature>
<accession>Q24UT2</accession>
<evidence type="ECO:0000255" key="1">
    <source>
        <dbReference type="HAMAP-Rule" id="MF_00036"/>
    </source>
</evidence>
<name>SYA_DESHY</name>